<dbReference type="EMBL" id="AL157959">
    <property type="protein sequence ID" value="CAM08277.1"/>
    <property type="molecule type" value="Genomic_DNA"/>
</dbReference>
<dbReference type="PIR" id="E81871">
    <property type="entry name" value="E81871"/>
</dbReference>
<dbReference type="RefSeq" id="WP_002236872.1">
    <property type="nucleotide sequence ID" value="NC_003116.1"/>
</dbReference>
<dbReference type="SMR" id="Q9JV01"/>
<dbReference type="EnsemblBacteria" id="CAM08277">
    <property type="protein sequence ID" value="CAM08277"/>
    <property type="gene ID" value="NMA1063"/>
</dbReference>
<dbReference type="GeneID" id="93386327"/>
<dbReference type="KEGG" id="nma:NMA1063"/>
<dbReference type="HOGENOM" id="CLU_016077_6_2_4"/>
<dbReference type="Proteomes" id="UP000000626">
    <property type="component" value="Chromosome"/>
</dbReference>
<dbReference type="GO" id="GO:0016887">
    <property type="term" value="F:ATP hydrolysis activity"/>
    <property type="evidence" value="ECO:0007669"/>
    <property type="project" value="InterPro"/>
</dbReference>
<dbReference type="GO" id="GO:0005525">
    <property type="term" value="F:GTP binding"/>
    <property type="evidence" value="ECO:0007669"/>
    <property type="project" value="UniProtKB-UniRule"/>
</dbReference>
<dbReference type="GO" id="GO:0043022">
    <property type="term" value="F:ribosome binding"/>
    <property type="evidence" value="ECO:0007669"/>
    <property type="project" value="TreeGrafter"/>
</dbReference>
<dbReference type="GO" id="GO:0042254">
    <property type="term" value="P:ribosome biogenesis"/>
    <property type="evidence" value="ECO:0007669"/>
    <property type="project" value="UniProtKB-KW"/>
</dbReference>
<dbReference type="CDD" id="cd01894">
    <property type="entry name" value="EngA1"/>
    <property type="match status" value="1"/>
</dbReference>
<dbReference type="CDD" id="cd01895">
    <property type="entry name" value="EngA2"/>
    <property type="match status" value="1"/>
</dbReference>
<dbReference type="FunFam" id="3.30.300.20:FF:000023">
    <property type="entry name" value="GTPase Der"/>
    <property type="match status" value="1"/>
</dbReference>
<dbReference type="FunFam" id="3.40.50.300:FF:000040">
    <property type="entry name" value="GTPase Der"/>
    <property type="match status" value="1"/>
</dbReference>
<dbReference type="FunFam" id="3.40.50.300:FF:000057">
    <property type="entry name" value="GTPase Der"/>
    <property type="match status" value="1"/>
</dbReference>
<dbReference type="Gene3D" id="3.30.300.20">
    <property type="match status" value="1"/>
</dbReference>
<dbReference type="Gene3D" id="3.40.50.300">
    <property type="entry name" value="P-loop containing nucleotide triphosphate hydrolases"/>
    <property type="match status" value="2"/>
</dbReference>
<dbReference type="HAMAP" id="MF_00195">
    <property type="entry name" value="GTPase_Der"/>
    <property type="match status" value="1"/>
</dbReference>
<dbReference type="InterPro" id="IPR003593">
    <property type="entry name" value="AAA+_ATPase"/>
</dbReference>
<dbReference type="InterPro" id="IPR031166">
    <property type="entry name" value="G_ENGA"/>
</dbReference>
<dbReference type="InterPro" id="IPR006073">
    <property type="entry name" value="GTP-bd"/>
</dbReference>
<dbReference type="InterPro" id="IPR016484">
    <property type="entry name" value="GTPase_Der"/>
</dbReference>
<dbReference type="InterPro" id="IPR032859">
    <property type="entry name" value="KH_dom-like"/>
</dbReference>
<dbReference type="InterPro" id="IPR015946">
    <property type="entry name" value="KH_dom-like_a/b"/>
</dbReference>
<dbReference type="InterPro" id="IPR027417">
    <property type="entry name" value="P-loop_NTPase"/>
</dbReference>
<dbReference type="InterPro" id="IPR005225">
    <property type="entry name" value="Small_GTP-bd"/>
</dbReference>
<dbReference type="NCBIfam" id="TIGR03594">
    <property type="entry name" value="GTPase_EngA"/>
    <property type="match status" value="1"/>
</dbReference>
<dbReference type="NCBIfam" id="TIGR00231">
    <property type="entry name" value="small_GTP"/>
    <property type="match status" value="2"/>
</dbReference>
<dbReference type="PANTHER" id="PTHR43834">
    <property type="entry name" value="GTPASE DER"/>
    <property type="match status" value="1"/>
</dbReference>
<dbReference type="PANTHER" id="PTHR43834:SF6">
    <property type="entry name" value="GTPASE DER"/>
    <property type="match status" value="1"/>
</dbReference>
<dbReference type="Pfam" id="PF14714">
    <property type="entry name" value="KH_dom-like"/>
    <property type="match status" value="1"/>
</dbReference>
<dbReference type="Pfam" id="PF01926">
    <property type="entry name" value="MMR_HSR1"/>
    <property type="match status" value="2"/>
</dbReference>
<dbReference type="PIRSF" id="PIRSF006485">
    <property type="entry name" value="GTP-binding_EngA"/>
    <property type="match status" value="1"/>
</dbReference>
<dbReference type="PRINTS" id="PR00326">
    <property type="entry name" value="GTP1OBG"/>
</dbReference>
<dbReference type="SMART" id="SM00382">
    <property type="entry name" value="AAA"/>
    <property type="match status" value="2"/>
</dbReference>
<dbReference type="SUPFAM" id="SSF52540">
    <property type="entry name" value="P-loop containing nucleoside triphosphate hydrolases"/>
    <property type="match status" value="2"/>
</dbReference>
<dbReference type="PROSITE" id="PS51712">
    <property type="entry name" value="G_ENGA"/>
    <property type="match status" value="2"/>
</dbReference>
<accession>Q9JV01</accession>
<accession>A1IR91</accession>
<sequence length="485" mass="54093">MKPTIALVGRPNVGKSTLFNRLTRTKDALVHDLPGLTRDRHYGHGKVGSKPYLVIDTGGFEPVVDSGILHEMAKQTLQAVDEADAVVFLVDGRTGLTPQDKIIADRLRQSPRPVYLAVNKGEGGNRAVLAAEFYELALGDPYVISGAHGDGVYYLIEDILETFPEPEKEEEEAKHPVFAVIGRPNVGKSTLVNAILGEERVIAFDMAGTTRDSIHIDFEREGKPFTIIDTAGVRRRGKVDEAVEKFSVIKAMQAVEAANVAVLVLDAQQDIADQDATIAGFALEAGRALVVAVNKWDGISEERREQVKRDINRKLYFLDFAKFHFISALKERGIDGLFDSIQAAYNAAMIKMPTPKITRVLQSAIERQQPPRAGLVRPKMRYAHQGGMNPPVIVVHGNSLHAISDSYTRYLTQTFRKAFNLQGTPLRIQYNVSENPYENADDKPKKKPLRRVSLSNRIEKREGRKEEKNRFKKKTKVSVKKQFSK</sequence>
<evidence type="ECO:0000255" key="1">
    <source>
        <dbReference type="HAMAP-Rule" id="MF_00195"/>
    </source>
</evidence>
<evidence type="ECO:0000256" key="2">
    <source>
        <dbReference type="SAM" id="MobiDB-lite"/>
    </source>
</evidence>
<proteinExistence type="inferred from homology"/>
<name>DER_NEIMA</name>
<comment type="function">
    <text evidence="1">GTPase that plays an essential role in the late steps of ribosome biogenesis.</text>
</comment>
<comment type="subunit">
    <text evidence="1">Associates with the 50S ribosomal subunit.</text>
</comment>
<comment type="similarity">
    <text evidence="1">Belongs to the TRAFAC class TrmE-Era-EngA-EngB-Septin-like GTPase superfamily. EngA (Der) GTPase family.</text>
</comment>
<reference key="1">
    <citation type="journal article" date="2000" name="Nature">
        <title>Complete DNA sequence of a serogroup A strain of Neisseria meningitidis Z2491.</title>
        <authorList>
            <person name="Parkhill J."/>
            <person name="Achtman M."/>
            <person name="James K.D."/>
            <person name="Bentley S.D."/>
            <person name="Churcher C.M."/>
            <person name="Klee S.R."/>
            <person name="Morelli G."/>
            <person name="Basham D."/>
            <person name="Brown D."/>
            <person name="Chillingworth T."/>
            <person name="Davies R.M."/>
            <person name="Davis P."/>
            <person name="Devlin K."/>
            <person name="Feltwell T."/>
            <person name="Hamlin N."/>
            <person name="Holroyd S."/>
            <person name="Jagels K."/>
            <person name="Leather S."/>
            <person name="Moule S."/>
            <person name="Mungall K.L."/>
            <person name="Quail M.A."/>
            <person name="Rajandream M.A."/>
            <person name="Rutherford K.M."/>
            <person name="Simmonds M."/>
            <person name="Skelton J."/>
            <person name="Whitehead S."/>
            <person name="Spratt B.G."/>
            <person name="Barrell B.G."/>
        </authorList>
    </citation>
    <scope>NUCLEOTIDE SEQUENCE [LARGE SCALE GENOMIC DNA]</scope>
    <source>
        <strain>DSM 15465 / Z2491</strain>
    </source>
</reference>
<organism>
    <name type="scientific">Neisseria meningitidis serogroup A / serotype 4A (strain DSM 15465 / Z2491)</name>
    <dbReference type="NCBI Taxonomy" id="122587"/>
    <lineage>
        <taxon>Bacteria</taxon>
        <taxon>Pseudomonadati</taxon>
        <taxon>Pseudomonadota</taxon>
        <taxon>Betaproteobacteria</taxon>
        <taxon>Neisseriales</taxon>
        <taxon>Neisseriaceae</taxon>
        <taxon>Neisseria</taxon>
    </lineage>
</organism>
<keyword id="KW-0342">GTP-binding</keyword>
<keyword id="KW-0547">Nucleotide-binding</keyword>
<keyword id="KW-0677">Repeat</keyword>
<keyword id="KW-0690">Ribosome biogenesis</keyword>
<gene>
    <name evidence="1" type="primary">der</name>
    <name type="synonym">engA</name>
    <name type="ordered locus">NMA1063</name>
</gene>
<feature type="chain" id="PRO_0000179020" description="GTPase Der">
    <location>
        <begin position="1"/>
        <end position="485"/>
    </location>
</feature>
<feature type="domain" description="EngA-type G 1">
    <location>
        <begin position="3"/>
        <end position="167"/>
    </location>
</feature>
<feature type="domain" description="EngA-type G 2">
    <location>
        <begin position="176"/>
        <end position="349"/>
    </location>
</feature>
<feature type="domain" description="KH-like" evidence="1">
    <location>
        <begin position="350"/>
        <end position="434"/>
    </location>
</feature>
<feature type="region of interest" description="Disordered" evidence="2">
    <location>
        <begin position="435"/>
        <end position="485"/>
    </location>
</feature>
<feature type="compositionally biased region" description="Basic and acidic residues" evidence="2">
    <location>
        <begin position="457"/>
        <end position="469"/>
    </location>
</feature>
<feature type="compositionally biased region" description="Basic residues" evidence="2">
    <location>
        <begin position="470"/>
        <end position="485"/>
    </location>
</feature>
<feature type="binding site" evidence="1">
    <location>
        <begin position="9"/>
        <end position="16"/>
    </location>
    <ligand>
        <name>GTP</name>
        <dbReference type="ChEBI" id="CHEBI:37565"/>
        <label>1</label>
    </ligand>
</feature>
<feature type="binding site" evidence="1">
    <location>
        <begin position="56"/>
        <end position="60"/>
    </location>
    <ligand>
        <name>GTP</name>
        <dbReference type="ChEBI" id="CHEBI:37565"/>
        <label>1</label>
    </ligand>
</feature>
<feature type="binding site" evidence="1">
    <location>
        <begin position="119"/>
        <end position="122"/>
    </location>
    <ligand>
        <name>GTP</name>
        <dbReference type="ChEBI" id="CHEBI:37565"/>
        <label>1</label>
    </ligand>
</feature>
<feature type="binding site" evidence="1">
    <location>
        <begin position="182"/>
        <end position="189"/>
    </location>
    <ligand>
        <name>GTP</name>
        <dbReference type="ChEBI" id="CHEBI:37565"/>
        <label>2</label>
    </ligand>
</feature>
<feature type="binding site" evidence="1">
    <location>
        <begin position="229"/>
        <end position="233"/>
    </location>
    <ligand>
        <name>GTP</name>
        <dbReference type="ChEBI" id="CHEBI:37565"/>
        <label>2</label>
    </ligand>
</feature>
<feature type="binding site" evidence="1">
    <location>
        <begin position="294"/>
        <end position="297"/>
    </location>
    <ligand>
        <name>GTP</name>
        <dbReference type="ChEBI" id="CHEBI:37565"/>
        <label>2</label>
    </ligand>
</feature>
<protein>
    <recommendedName>
        <fullName evidence="1">GTPase Der</fullName>
    </recommendedName>
    <alternativeName>
        <fullName evidence="1">GTP-binding protein EngA</fullName>
    </alternativeName>
</protein>